<dbReference type="EMBL" id="CP000489">
    <property type="protein sequence ID" value="ABL68686.1"/>
    <property type="molecule type" value="Genomic_DNA"/>
</dbReference>
<dbReference type="RefSeq" id="WP_011746919.1">
    <property type="nucleotide sequence ID" value="NC_008686.1"/>
</dbReference>
<dbReference type="SMR" id="A1AZJ2"/>
<dbReference type="STRING" id="318586.Pden_0574"/>
<dbReference type="EnsemblBacteria" id="ABL68686">
    <property type="protein sequence ID" value="ABL68686"/>
    <property type="gene ID" value="Pden_0574"/>
</dbReference>
<dbReference type="GeneID" id="93451799"/>
<dbReference type="KEGG" id="pde:Pden_0574"/>
<dbReference type="eggNOG" id="COG2220">
    <property type="taxonomic scope" value="Bacteria"/>
</dbReference>
<dbReference type="HOGENOM" id="CLU_070010_4_0_5"/>
<dbReference type="OrthoDB" id="9789133at2"/>
<dbReference type="Proteomes" id="UP000000361">
    <property type="component" value="Chromosome 1"/>
</dbReference>
<dbReference type="GO" id="GO:0016787">
    <property type="term" value="F:hydrolase activity"/>
    <property type="evidence" value="ECO:0007669"/>
    <property type="project" value="UniProtKB-UniRule"/>
</dbReference>
<dbReference type="Gene3D" id="3.60.15.10">
    <property type="entry name" value="Ribonuclease Z/Hydroxyacylglutathione hydrolase-like"/>
    <property type="match status" value="1"/>
</dbReference>
<dbReference type="HAMAP" id="MF_00457">
    <property type="entry name" value="UPF0173"/>
    <property type="match status" value="1"/>
</dbReference>
<dbReference type="InterPro" id="IPR001279">
    <property type="entry name" value="Metallo-B-lactamas"/>
</dbReference>
<dbReference type="InterPro" id="IPR036866">
    <property type="entry name" value="RibonucZ/Hydroxyglut_hydro"/>
</dbReference>
<dbReference type="InterPro" id="IPR022877">
    <property type="entry name" value="UPF0173"/>
</dbReference>
<dbReference type="InterPro" id="IPR050114">
    <property type="entry name" value="UPF0173_UPF0282_UlaG_hydrolase"/>
</dbReference>
<dbReference type="NCBIfam" id="NF001911">
    <property type="entry name" value="PRK00685.1"/>
    <property type="match status" value="1"/>
</dbReference>
<dbReference type="PANTHER" id="PTHR43546:SF3">
    <property type="entry name" value="UPF0173 METAL-DEPENDENT HYDROLASE MJ1163"/>
    <property type="match status" value="1"/>
</dbReference>
<dbReference type="PANTHER" id="PTHR43546">
    <property type="entry name" value="UPF0173 METAL-DEPENDENT HYDROLASE MJ1163-RELATED"/>
    <property type="match status" value="1"/>
</dbReference>
<dbReference type="Pfam" id="PF12706">
    <property type="entry name" value="Lactamase_B_2"/>
    <property type="match status" value="1"/>
</dbReference>
<dbReference type="SMART" id="SM00849">
    <property type="entry name" value="Lactamase_B"/>
    <property type="match status" value="1"/>
</dbReference>
<dbReference type="SUPFAM" id="SSF56281">
    <property type="entry name" value="Metallo-hydrolase/oxidoreductase"/>
    <property type="match status" value="1"/>
</dbReference>
<evidence type="ECO:0000255" key="1">
    <source>
        <dbReference type="HAMAP-Rule" id="MF_00457"/>
    </source>
</evidence>
<name>Y574_PARDP</name>
<organism>
    <name type="scientific">Paracoccus denitrificans (strain Pd 1222)</name>
    <dbReference type="NCBI Taxonomy" id="318586"/>
    <lineage>
        <taxon>Bacteria</taxon>
        <taxon>Pseudomonadati</taxon>
        <taxon>Pseudomonadota</taxon>
        <taxon>Alphaproteobacteria</taxon>
        <taxon>Rhodobacterales</taxon>
        <taxon>Paracoccaceae</taxon>
        <taxon>Paracoccus</taxon>
    </lineage>
</organism>
<keyword id="KW-0378">Hydrolase</keyword>
<keyword id="KW-1185">Reference proteome</keyword>
<gene>
    <name type="ordered locus">Pden_0574</name>
</gene>
<protein>
    <recommendedName>
        <fullName evidence="1">UPF0173 metal-dependent hydrolase Pden_0574</fullName>
    </recommendedName>
</protein>
<proteinExistence type="inferred from homology"/>
<sequence>MKLTWLGHSGFRLEIEQAVILIDPWLSGNPMFPEDRRDEAIQGATHILLTHGHGDHTGDTLSIARELKIPVVGIYDLINTWQTHQGIEGLGFNKGGTVDLGGAKVTMVNASHSSSFDGNEGPVYAGHESGYMIAGEGHVIYVSGDTDIMADMQWMGEYHQPDIGILCAGGHFTMDMDRAAWAARKYFDFKTVIPCHYKTFPLLAQDAEVLKAGLPGVQVIEPEVMQPIPL</sequence>
<reference key="1">
    <citation type="submission" date="2006-12" db="EMBL/GenBank/DDBJ databases">
        <title>Complete sequence of chromosome 1 of Paracoccus denitrificans PD1222.</title>
        <authorList>
            <person name="Copeland A."/>
            <person name="Lucas S."/>
            <person name="Lapidus A."/>
            <person name="Barry K."/>
            <person name="Detter J.C."/>
            <person name="Glavina del Rio T."/>
            <person name="Hammon N."/>
            <person name="Israni S."/>
            <person name="Dalin E."/>
            <person name="Tice H."/>
            <person name="Pitluck S."/>
            <person name="Munk A.C."/>
            <person name="Brettin T."/>
            <person name="Bruce D."/>
            <person name="Han C."/>
            <person name="Tapia R."/>
            <person name="Gilna P."/>
            <person name="Schmutz J."/>
            <person name="Larimer F."/>
            <person name="Land M."/>
            <person name="Hauser L."/>
            <person name="Kyrpides N."/>
            <person name="Lykidis A."/>
            <person name="Spiro S."/>
            <person name="Richardson D.J."/>
            <person name="Moir J.W.B."/>
            <person name="Ferguson S.J."/>
            <person name="van Spanning R.J.M."/>
            <person name="Richardson P."/>
        </authorList>
    </citation>
    <scope>NUCLEOTIDE SEQUENCE [LARGE SCALE GENOMIC DNA]</scope>
    <source>
        <strain>Pd 1222</strain>
    </source>
</reference>
<feature type="chain" id="PRO_0000367197" description="UPF0173 metal-dependent hydrolase Pden_0574">
    <location>
        <begin position="1"/>
        <end position="230"/>
    </location>
</feature>
<comment type="similarity">
    <text evidence="1">Belongs to the UPF0173 family.</text>
</comment>
<accession>A1AZJ2</accession>